<proteinExistence type="evidence at protein level"/>
<accession>A0A0S6XGJ8</accession>
<evidence type="ECO:0000255" key="1">
    <source>
        <dbReference type="PROSITE-ProRule" id="PRU00805"/>
    </source>
</evidence>
<evidence type="ECO:0000256" key="2">
    <source>
        <dbReference type="SAM" id="MobiDB-lite"/>
    </source>
</evidence>
<evidence type="ECO:0000269" key="3">
    <source>
    </source>
</evidence>
<evidence type="ECO:0000269" key="4">
    <source>
    </source>
</evidence>
<evidence type="ECO:0000269" key="5">
    <source>
    </source>
</evidence>
<evidence type="ECO:0000303" key="6">
    <source>
    </source>
</evidence>
<evidence type="ECO:0000305" key="7"/>
<evidence type="ECO:0000305" key="8">
    <source>
    </source>
</evidence>
<name>FRBH_DOTX1</name>
<sequence length="321" mass="36235">MSQQEAVDAAFLPTLDLSRLVSSDAEERQKLVRACEVYGFFYLDLRSDAELIALWTGVLDLMGQYFNLSLDEKMRDSRNSDTHGYEPVATSTGAQDDLPDYYESLKASRDEVLTQSSKLAPAVKANHALLNRFIERAHAVTMMILRQLSIALELDDSHKFEAFHRHSEESLSTLSMFRYPKQEVLDVGVGHNKHTDIGTLTFLLCQQQGLQVLSKDPVGWRFVQPLPGCAVINVGDTLRFLSGSRFRSAVHRVIPVDQLQRQDRFSIAYFLRAENNATLNAVGGRTVSAKDWHDEKFDVFRKSREAQASDDVLTGGMERDM</sequence>
<comment type="function">
    <text evidence="5 8">2-oxoglutarate-dependent dioxygenase; part of the gene cluster that mediates the biosynthesis of the antifungal antibiotic FR901469, an inhibitor of beta-1,3-glucansynthase, exerting antifungal activity against the pathogenes Candida albicans and Aspergillus fumigatus (PubMed:27660098). FR901469 is a cyclic depsipeptide containing 12 amino acid residues and a fatty acid chain (PubMed:27660098). The NRPS frbI contains 12 modules responsible for the formation of the depsipeptide backbone which is denoted as Acyl-Thr-Ala-Tyr-Val-4OHPro-Thr-Thr-3OHPro-threo3OHGln-Gly-Thr-Orn-OH (C71H116N14O23) (Probable). The PKS frbB is probably involved in the production of the hydrocarbon chain, and the acyl-CoA ligase frbC might be involved in the transport of the chain to the peptide ptoduct of frbI (Probable). Because FR901469 contains 3 hydroxylated amino acid residues, the 3 oxygenases frbA, frbH, and frbJ might be participating in amino acid hydroxylation (Probable). As no thioesterase domains were detected in frbI or frbB, the thioesterases frbD and frbE may instead release and cyclize the products of the NRPS and PKS, respectively (Probable).</text>
</comment>
<comment type="pathway">
    <text evidence="8">Antifungal biosynthesis.</text>
</comment>
<comment type="induction">
    <text evidence="5">Expression is positively regulated by the cluster-specific transcription factor frbF.</text>
</comment>
<comment type="biotechnology">
    <text evidence="3 4">FR901469 inhibits the activity of 1,3-beta-glucan synthase from Candida albicans and Aspergillus fumigatus (PubMed:11099224, PubMed:11099225). With minimal inhibitory concentrations (MICs) against Candida albicans and Aspergillus fumigatus of 0.63 ug/ml and 0.16 ug/ml, repectively, FR901469 displays greater inhibitory activity than other 1,3-beta-glucan synthase inhibitors such as, WF11899A, echinocandin B, aculeacin A, and papulacandin B (PubMed:11099224, PubMed:11099225).</text>
</comment>
<comment type="similarity">
    <text evidence="7">Belongs to the iron/ascorbate-dependent oxidoreductase family.</text>
</comment>
<reference key="1">
    <citation type="journal article" date="2015" name="Genome Announc.">
        <title>Genome sequence of fungal species No.11243, which produces the antifungal antibiotic FR901469.</title>
        <authorList>
            <person name="Matsui M."/>
            <person name="Yokoyama T."/>
            <person name="Nemoto K."/>
            <person name="Kumagai T."/>
            <person name="Terai G."/>
            <person name="Arita M."/>
            <person name="Machida M."/>
            <person name="Shibata T."/>
        </authorList>
    </citation>
    <scope>NUCLEOTIDE SEQUENCE [LARGE SCALE GENOMIC DNA]</scope>
</reference>
<reference key="2">
    <citation type="journal article" date="2000" name="J. Antibiot.">
        <title>FR901469, a novel antifungal antibiotic from an unidentified fungus No.11243. I. Taxonomy, fermentation, isolation, physico-chemical properties and biological properties.</title>
        <authorList>
            <person name="Fujie A."/>
            <person name="Iwamoto T."/>
            <person name="Muramatsu H."/>
            <person name="Okudaira T."/>
            <person name="Nitta K."/>
            <person name="Nakanishi T."/>
            <person name="Sakamoto K."/>
            <person name="Hori Y."/>
            <person name="Hino M."/>
            <person name="Hashimoto S."/>
            <person name="Okuhara M."/>
        </authorList>
    </citation>
    <scope>BIOTECHNOLOGY</scope>
</reference>
<reference key="3">
    <citation type="journal article" date="2000" name="J. Antibiot.">
        <title>FR901469, a novel antifungal antibiotic from an unidentified fungus No.11243. II. In vitro and in vivo activities.</title>
        <authorList>
            <person name="Fujie A."/>
            <person name="Iwamoto T."/>
            <person name="Muramatsu H."/>
            <person name="Okudaira T."/>
            <person name="Sato I."/>
            <person name="Furuta T."/>
            <person name="Tsurumi Y."/>
            <person name="Hori Y."/>
            <person name="Hino M."/>
            <person name="Hashimoto S."/>
            <person name="Okuhara M."/>
        </authorList>
    </citation>
    <scope>BIOTECHNOLOGY</scope>
</reference>
<reference key="4">
    <citation type="journal article" date="2017" name="J. Biosci. Bioeng.">
        <title>Identification of a putative FR901469 biosynthesis gene cluster in fungal sp. No. 11243 and enhancement of the productivity by overexpressing the transcription factor gene frbF.</title>
        <authorList>
            <person name="Matsui M."/>
            <person name="Yokoyama T."/>
            <person name="Nemoto K."/>
            <person name="Kumagai T."/>
            <person name="Terai G."/>
            <person name="Tamano K."/>
            <person name="Machida M."/>
            <person name="Shibata T."/>
        </authorList>
    </citation>
    <scope>FUNCTION</scope>
    <scope>INDUCTION</scope>
    <scope>PATHWAY</scope>
</reference>
<dbReference type="EC" id="1.14.-.-" evidence="8"/>
<dbReference type="EMBL" id="DF938583">
    <property type="protein sequence ID" value="GAM84989.1"/>
    <property type="molecule type" value="Genomic_DNA"/>
</dbReference>
<dbReference type="SMR" id="A0A0S6XGJ8"/>
<dbReference type="STRING" id="1603295.A0A0S6XGJ8"/>
<dbReference type="OrthoDB" id="288590at2759"/>
<dbReference type="Proteomes" id="UP000054361">
    <property type="component" value="Unassembled WGS sequence"/>
</dbReference>
<dbReference type="GO" id="GO:0051213">
    <property type="term" value="F:dioxygenase activity"/>
    <property type="evidence" value="ECO:0007669"/>
    <property type="project" value="UniProtKB-KW"/>
</dbReference>
<dbReference type="GO" id="GO:0046872">
    <property type="term" value="F:metal ion binding"/>
    <property type="evidence" value="ECO:0007669"/>
    <property type="project" value="UniProtKB-KW"/>
</dbReference>
<dbReference type="GO" id="GO:0044283">
    <property type="term" value="P:small molecule biosynthetic process"/>
    <property type="evidence" value="ECO:0007669"/>
    <property type="project" value="UniProtKB-ARBA"/>
</dbReference>
<dbReference type="Gene3D" id="2.60.120.330">
    <property type="entry name" value="B-lactam Antibiotic, Isopenicillin N Synthase, Chain"/>
    <property type="match status" value="1"/>
</dbReference>
<dbReference type="InterPro" id="IPR026992">
    <property type="entry name" value="DIOX_N"/>
</dbReference>
<dbReference type="InterPro" id="IPR044861">
    <property type="entry name" value="IPNS-like_FE2OG_OXY"/>
</dbReference>
<dbReference type="InterPro" id="IPR027443">
    <property type="entry name" value="IPNS-like_sf"/>
</dbReference>
<dbReference type="InterPro" id="IPR050231">
    <property type="entry name" value="Iron_ascorbate_oxido_reductase"/>
</dbReference>
<dbReference type="InterPro" id="IPR005123">
    <property type="entry name" value="Oxoglu/Fe-dep_dioxygenase_dom"/>
</dbReference>
<dbReference type="PANTHER" id="PTHR47990">
    <property type="entry name" value="2-OXOGLUTARATE (2OG) AND FE(II)-DEPENDENT OXYGENASE SUPERFAMILY PROTEIN-RELATED"/>
    <property type="match status" value="1"/>
</dbReference>
<dbReference type="Pfam" id="PF03171">
    <property type="entry name" value="2OG-FeII_Oxy"/>
    <property type="match status" value="1"/>
</dbReference>
<dbReference type="Pfam" id="PF14226">
    <property type="entry name" value="DIOX_N"/>
    <property type="match status" value="1"/>
</dbReference>
<dbReference type="SUPFAM" id="SSF51197">
    <property type="entry name" value="Clavaminate synthase-like"/>
    <property type="match status" value="1"/>
</dbReference>
<dbReference type="PROSITE" id="PS51471">
    <property type="entry name" value="FE2OG_OXY"/>
    <property type="match status" value="1"/>
</dbReference>
<keyword id="KW-0223">Dioxygenase</keyword>
<keyword id="KW-0408">Iron</keyword>
<keyword id="KW-0479">Metal-binding</keyword>
<keyword id="KW-0560">Oxidoreductase</keyword>
<keyword id="KW-1185">Reference proteome</keyword>
<protein>
    <recommendedName>
        <fullName evidence="6">2-oxoglutarate-dependent dioxygenase frbH</fullName>
        <ecNumber evidence="8">1.14.-.-</ecNumber>
    </recommendedName>
    <alternativeName>
        <fullName evidence="6">FR901469 biosynthesis cluster protein H</fullName>
    </alternativeName>
</protein>
<gene>
    <name evidence="6" type="primary">frbH</name>
    <name type="ORF">ANO11243_029920</name>
</gene>
<feature type="chain" id="PRO_0000454569" description="2-oxoglutarate-dependent dioxygenase frbH">
    <location>
        <begin position="1"/>
        <end position="321"/>
    </location>
</feature>
<feature type="domain" description="Fe2OG dioxygenase" evidence="1">
    <location>
        <begin position="169"/>
        <end position="273"/>
    </location>
</feature>
<feature type="region of interest" description="Disordered" evidence="2">
    <location>
        <begin position="77"/>
        <end position="97"/>
    </location>
</feature>
<feature type="binding site" evidence="1">
    <location>
        <position position="194"/>
    </location>
    <ligand>
        <name>Fe cation</name>
        <dbReference type="ChEBI" id="CHEBI:24875"/>
    </ligand>
</feature>
<feature type="binding site" evidence="1">
    <location>
        <position position="196"/>
    </location>
    <ligand>
        <name>Fe cation</name>
        <dbReference type="ChEBI" id="CHEBI:24875"/>
    </ligand>
</feature>
<feature type="binding site" evidence="1">
    <location>
        <position position="251"/>
    </location>
    <ligand>
        <name>Fe cation</name>
        <dbReference type="ChEBI" id="CHEBI:24875"/>
    </ligand>
</feature>
<feature type="binding site" evidence="1">
    <location>
        <position position="264"/>
    </location>
    <ligand>
        <name>2-oxoglutarate</name>
        <dbReference type="ChEBI" id="CHEBI:16810"/>
    </ligand>
</feature>
<organism>
    <name type="scientific">Dothideomycetidae sp. (strain 11243)</name>
    <name type="common">Fungal sp. (strain No.11243)</name>
    <dbReference type="NCBI Taxonomy" id="1603295"/>
    <lineage>
        <taxon>Eukaryota</taxon>
        <taxon>Fungi</taxon>
        <taxon>Dikarya</taxon>
        <taxon>Ascomycota</taxon>
        <taxon>Pezizomycotina</taxon>
        <taxon>Dothideomycetes</taxon>
        <taxon>Dothideomycetidae</taxon>
    </lineage>
</organism>